<gene>
    <name type="primary">hisH1</name>
    <name type="ordered locus">SYNW0435</name>
</gene>
<proteinExistence type="inferred from homology"/>
<feature type="chain" id="PRO_0000152434" description="Imidazole glycerol phosphate synthase subunit HisH 1">
    <location>
        <begin position="1"/>
        <end position="210"/>
    </location>
</feature>
<feature type="domain" description="Glutamine amidotransferase type-1">
    <location>
        <begin position="3"/>
        <end position="210"/>
    </location>
</feature>
<feature type="active site" description="Nucleophile" evidence="1">
    <location>
        <position position="82"/>
    </location>
</feature>
<feature type="active site" evidence="1">
    <location>
        <position position="189"/>
    </location>
</feature>
<feature type="active site" evidence="1">
    <location>
        <position position="191"/>
    </location>
</feature>
<accession>Q7U924</accession>
<sequence length="210" mass="23115">MSKIAIVDYGMCNLWSIKSAIQFIGYDSILTSDPKDILNSSAIILPGVGSFKTGMDNLLSLGLSQAIIDACMFRSIPILGICLGFQLLCCSSEEPSYTKGLSLLPIQIVPLCRHIDASFVLPHVGFTSVYTSKNDPLFKNIANKSDFYFVHSYGAFNVPHDFTTYSYCNYDAKIISSANVNHIMGVQFHPEKSQTNGLILLDNFLSFSNV</sequence>
<keyword id="KW-0028">Amino-acid biosynthesis</keyword>
<keyword id="KW-0963">Cytoplasm</keyword>
<keyword id="KW-0315">Glutamine amidotransferase</keyword>
<keyword id="KW-0368">Histidine biosynthesis</keyword>
<keyword id="KW-0378">Hydrolase</keyword>
<keyword id="KW-0456">Lyase</keyword>
<organism>
    <name type="scientific">Parasynechococcus marenigrum (strain WH8102)</name>
    <dbReference type="NCBI Taxonomy" id="84588"/>
    <lineage>
        <taxon>Bacteria</taxon>
        <taxon>Bacillati</taxon>
        <taxon>Cyanobacteriota</taxon>
        <taxon>Cyanophyceae</taxon>
        <taxon>Synechococcales</taxon>
        <taxon>Prochlorococcaceae</taxon>
        <taxon>Parasynechococcus</taxon>
        <taxon>Parasynechococcus marenigrum</taxon>
    </lineage>
</organism>
<dbReference type="EC" id="4.3.2.10"/>
<dbReference type="EC" id="3.5.1.2"/>
<dbReference type="EMBL" id="BX569690">
    <property type="protein sequence ID" value="CAE06950.1"/>
    <property type="molecule type" value="Genomic_DNA"/>
</dbReference>
<dbReference type="RefSeq" id="WP_011127309.1">
    <property type="nucleotide sequence ID" value="NC_005070.1"/>
</dbReference>
<dbReference type="SMR" id="Q7U924"/>
<dbReference type="STRING" id="84588.SYNW0435"/>
<dbReference type="KEGG" id="syw:SYNW0435"/>
<dbReference type="eggNOG" id="COG0118">
    <property type="taxonomic scope" value="Bacteria"/>
</dbReference>
<dbReference type="HOGENOM" id="CLU_071837_2_2_3"/>
<dbReference type="UniPathway" id="UPA00031">
    <property type="reaction ID" value="UER00010"/>
</dbReference>
<dbReference type="Proteomes" id="UP000001422">
    <property type="component" value="Chromosome"/>
</dbReference>
<dbReference type="GO" id="GO:0005737">
    <property type="term" value="C:cytoplasm"/>
    <property type="evidence" value="ECO:0007669"/>
    <property type="project" value="UniProtKB-SubCell"/>
</dbReference>
<dbReference type="GO" id="GO:0004359">
    <property type="term" value="F:glutaminase activity"/>
    <property type="evidence" value="ECO:0007669"/>
    <property type="project" value="UniProtKB-EC"/>
</dbReference>
<dbReference type="GO" id="GO:0000107">
    <property type="term" value="F:imidazoleglycerol-phosphate synthase activity"/>
    <property type="evidence" value="ECO:0007669"/>
    <property type="project" value="UniProtKB-UniRule"/>
</dbReference>
<dbReference type="GO" id="GO:0016829">
    <property type="term" value="F:lyase activity"/>
    <property type="evidence" value="ECO:0007669"/>
    <property type="project" value="UniProtKB-KW"/>
</dbReference>
<dbReference type="GO" id="GO:0000105">
    <property type="term" value="P:L-histidine biosynthetic process"/>
    <property type="evidence" value="ECO:0007669"/>
    <property type="project" value="UniProtKB-UniRule"/>
</dbReference>
<dbReference type="CDD" id="cd01748">
    <property type="entry name" value="GATase1_IGP_Synthase"/>
    <property type="match status" value="1"/>
</dbReference>
<dbReference type="Gene3D" id="3.40.50.880">
    <property type="match status" value="1"/>
</dbReference>
<dbReference type="HAMAP" id="MF_00278">
    <property type="entry name" value="HisH"/>
    <property type="match status" value="1"/>
</dbReference>
<dbReference type="InterPro" id="IPR029062">
    <property type="entry name" value="Class_I_gatase-like"/>
</dbReference>
<dbReference type="InterPro" id="IPR017926">
    <property type="entry name" value="GATASE"/>
</dbReference>
<dbReference type="InterPro" id="IPR010139">
    <property type="entry name" value="Imidazole-glycPsynth_HisH"/>
</dbReference>
<dbReference type="NCBIfam" id="TIGR01855">
    <property type="entry name" value="IMP_synth_hisH"/>
    <property type="match status" value="1"/>
</dbReference>
<dbReference type="PANTHER" id="PTHR42701">
    <property type="entry name" value="IMIDAZOLE GLYCEROL PHOSPHATE SYNTHASE SUBUNIT HISH"/>
    <property type="match status" value="1"/>
</dbReference>
<dbReference type="PANTHER" id="PTHR42701:SF1">
    <property type="entry name" value="IMIDAZOLE GLYCEROL PHOSPHATE SYNTHASE SUBUNIT HISH"/>
    <property type="match status" value="1"/>
</dbReference>
<dbReference type="Pfam" id="PF00117">
    <property type="entry name" value="GATase"/>
    <property type="match status" value="1"/>
</dbReference>
<dbReference type="PIRSF" id="PIRSF000495">
    <property type="entry name" value="Amidotransf_hisH"/>
    <property type="match status" value="1"/>
</dbReference>
<dbReference type="SUPFAM" id="SSF52317">
    <property type="entry name" value="Class I glutamine amidotransferase-like"/>
    <property type="match status" value="1"/>
</dbReference>
<dbReference type="PROSITE" id="PS51273">
    <property type="entry name" value="GATASE_TYPE_1"/>
    <property type="match status" value="1"/>
</dbReference>
<comment type="function">
    <text evidence="1">IGPS catalyzes the conversion of PRFAR and glutamine to IGP, AICAR and glutamate. The HisH subunit provides the glutamine amidotransferase activity that produces the ammonia necessary to HisF for the synthesis of IGP and AICAR (By similarity).</text>
</comment>
<comment type="catalytic activity">
    <reaction>
        <text>5-[(5-phospho-1-deoxy-D-ribulos-1-ylimino)methylamino]-1-(5-phospho-beta-D-ribosyl)imidazole-4-carboxamide + L-glutamine = D-erythro-1-(imidazol-4-yl)glycerol 3-phosphate + 5-amino-1-(5-phospho-beta-D-ribosyl)imidazole-4-carboxamide + L-glutamate + H(+)</text>
        <dbReference type="Rhea" id="RHEA:24793"/>
        <dbReference type="ChEBI" id="CHEBI:15378"/>
        <dbReference type="ChEBI" id="CHEBI:29985"/>
        <dbReference type="ChEBI" id="CHEBI:58278"/>
        <dbReference type="ChEBI" id="CHEBI:58359"/>
        <dbReference type="ChEBI" id="CHEBI:58475"/>
        <dbReference type="ChEBI" id="CHEBI:58525"/>
        <dbReference type="EC" id="4.3.2.10"/>
    </reaction>
</comment>
<comment type="catalytic activity">
    <reaction>
        <text>L-glutamine + H2O = L-glutamate + NH4(+)</text>
        <dbReference type="Rhea" id="RHEA:15889"/>
        <dbReference type="ChEBI" id="CHEBI:15377"/>
        <dbReference type="ChEBI" id="CHEBI:28938"/>
        <dbReference type="ChEBI" id="CHEBI:29985"/>
        <dbReference type="ChEBI" id="CHEBI:58359"/>
        <dbReference type="EC" id="3.5.1.2"/>
    </reaction>
</comment>
<comment type="pathway">
    <text>Amino-acid biosynthesis; L-histidine biosynthesis; L-histidine from 5-phospho-alpha-D-ribose 1-diphosphate: step 5/9.</text>
</comment>
<comment type="subunit">
    <text evidence="1">Heterodimer of HisH and HisF.</text>
</comment>
<comment type="subcellular location">
    <subcellularLocation>
        <location evidence="1">Cytoplasm</location>
    </subcellularLocation>
</comment>
<name>HIS51_PARMW</name>
<protein>
    <recommendedName>
        <fullName>Imidazole glycerol phosphate synthase subunit HisH 1</fullName>
        <ecNumber>4.3.2.10</ecNumber>
    </recommendedName>
    <alternativeName>
        <fullName>IGP synthase glutaminase subunit 1</fullName>
        <ecNumber>3.5.1.2</ecNumber>
    </alternativeName>
    <alternativeName>
        <fullName>IGP synthase subunit HisH 1</fullName>
    </alternativeName>
    <alternativeName>
        <fullName>ImGP synthase subunit HisH 1</fullName>
        <shortName>IGPS subunit HisH 1</shortName>
    </alternativeName>
</protein>
<reference key="1">
    <citation type="journal article" date="2003" name="Nature">
        <title>The genome of a motile marine Synechococcus.</title>
        <authorList>
            <person name="Palenik B."/>
            <person name="Brahamsha B."/>
            <person name="Larimer F.W."/>
            <person name="Land M.L."/>
            <person name="Hauser L."/>
            <person name="Chain P."/>
            <person name="Lamerdin J.E."/>
            <person name="Regala W."/>
            <person name="Allen E.E."/>
            <person name="McCarren J."/>
            <person name="Paulsen I.T."/>
            <person name="Dufresne A."/>
            <person name="Partensky F."/>
            <person name="Webb E.A."/>
            <person name="Waterbury J."/>
        </authorList>
    </citation>
    <scope>NUCLEOTIDE SEQUENCE [LARGE SCALE GENOMIC DNA]</scope>
    <source>
        <strain>WH8102</strain>
    </source>
</reference>
<evidence type="ECO:0000250" key="1"/>